<proteinExistence type="inferred from homology"/>
<dbReference type="EC" id="2.1.1.190" evidence="1"/>
<dbReference type="EMBL" id="CR378673">
    <property type="protein sequence ID" value="CAG21399.1"/>
    <property type="status" value="ALT_INIT"/>
    <property type="molecule type" value="Genomic_DNA"/>
</dbReference>
<dbReference type="RefSeq" id="WP_041394516.1">
    <property type="nucleotide sequence ID" value="NC_006370.1"/>
</dbReference>
<dbReference type="SMR" id="Q6LMS7"/>
<dbReference type="STRING" id="298386.PBPRA3083"/>
<dbReference type="KEGG" id="ppr:PBPRA3083"/>
<dbReference type="eggNOG" id="COG2265">
    <property type="taxonomic scope" value="Bacteria"/>
</dbReference>
<dbReference type="HOGENOM" id="CLU_014689_8_2_6"/>
<dbReference type="Proteomes" id="UP000000593">
    <property type="component" value="Chromosome 1"/>
</dbReference>
<dbReference type="GO" id="GO:0051539">
    <property type="term" value="F:4 iron, 4 sulfur cluster binding"/>
    <property type="evidence" value="ECO:0007669"/>
    <property type="project" value="UniProtKB-KW"/>
</dbReference>
<dbReference type="GO" id="GO:0005506">
    <property type="term" value="F:iron ion binding"/>
    <property type="evidence" value="ECO:0007669"/>
    <property type="project" value="UniProtKB-UniRule"/>
</dbReference>
<dbReference type="GO" id="GO:0003723">
    <property type="term" value="F:RNA binding"/>
    <property type="evidence" value="ECO:0007669"/>
    <property type="project" value="InterPro"/>
</dbReference>
<dbReference type="GO" id="GO:0070041">
    <property type="term" value="F:rRNA (uridine-C5-)-methyltransferase activity"/>
    <property type="evidence" value="ECO:0007669"/>
    <property type="project" value="UniProtKB-UniRule"/>
</dbReference>
<dbReference type="GO" id="GO:0070475">
    <property type="term" value="P:rRNA base methylation"/>
    <property type="evidence" value="ECO:0007669"/>
    <property type="project" value="TreeGrafter"/>
</dbReference>
<dbReference type="CDD" id="cd02440">
    <property type="entry name" value="AdoMet_MTases"/>
    <property type="match status" value="1"/>
</dbReference>
<dbReference type="FunFam" id="3.40.50.150:FF:000009">
    <property type="entry name" value="23S rRNA (Uracil(1939)-C(5))-methyltransferase RlmD"/>
    <property type="match status" value="1"/>
</dbReference>
<dbReference type="FunFam" id="2.40.50.140:FF:000097">
    <property type="entry name" value="23S rRNA (uracil(1939)-C(5))-methyltransferase RlmD"/>
    <property type="match status" value="1"/>
</dbReference>
<dbReference type="Gene3D" id="2.40.50.1070">
    <property type="match status" value="1"/>
</dbReference>
<dbReference type="Gene3D" id="2.40.50.140">
    <property type="entry name" value="Nucleic acid-binding proteins"/>
    <property type="match status" value="1"/>
</dbReference>
<dbReference type="Gene3D" id="3.40.50.150">
    <property type="entry name" value="Vaccinia Virus protein VP39"/>
    <property type="match status" value="1"/>
</dbReference>
<dbReference type="HAMAP" id="MF_01010">
    <property type="entry name" value="23SrRNA_methyltr_RlmD"/>
    <property type="match status" value="1"/>
</dbReference>
<dbReference type="InterPro" id="IPR001566">
    <property type="entry name" value="23S_rRNA_MeTrfase_RlmD"/>
</dbReference>
<dbReference type="InterPro" id="IPR030390">
    <property type="entry name" value="MeTrfase_TrmA_AS"/>
</dbReference>
<dbReference type="InterPro" id="IPR030391">
    <property type="entry name" value="MeTrfase_TrmA_CS"/>
</dbReference>
<dbReference type="InterPro" id="IPR012340">
    <property type="entry name" value="NA-bd_OB-fold"/>
</dbReference>
<dbReference type="InterPro" id="IPR029063">
    <property type="entry name" value="SAM-dependent_MTases_sf"/>
</dbReference>
<dbReference type="InterPro" id="IPR002792">
    <property type="entry name" value="TRAM_dom"/>
</dbReference>
<dbReference type="InterPro" id="IPR010280">
    <property type="entry name" value="U5_MeTrfase_fam"/>
</dbReference>
<dbReference type="NCBIfam" id="NF009639">
    <property type="entry name" value="PRK13168.1"/>
    <property type="match status" value="1"/>
</dbReference>
<dbReference type="NCBIfam" id="TIGR00479">
    <property type="entry name" value="rumA"/>
    <property type="match status" value="1"/>
</dbReference>
<dbReference type="PANTHER" id="PTHR11061:SF49">
    <property type="entry name" value="23S RRNA (URACIL(1939)-C(5))-METHYLTRANSFERASE RLMD"/>
    <property type="match status" value="1"/>
</dbReference>
<dbReference type="PANTHER" id="PTHR11061">
    <property type="entry name" value="RNA M5U METHYLTRANSFERASE"/>
    <property type="match status" value="1"/>
</dbReference>
<dbReference type="Pfam" id="PF01938">
    <property type="entry name" value="TRAM"/>
    <property type="match status" value="1"/>
</dbReference>
<dbReference type="Pfam" id="PF05958">
    <property type="entry name" value="tRNA_U5-meth_tr"/>
    <property type="match status" value="1"/>
</dbReference>
<dbReference type="SUPFAM" id="SSF50249">
    <property type="entry name" value="Nucleic acid-binding proteins"/>
    <property type="match status" value="1"/>
</dbReference>
<dbReference type="SUPFAM" id="SSF53335">
    <property type="entry name" value="S-adenosyl-L-methionine-dependent methyltransferases"/>
    <property type="match status" value="1"/>
</dbReference>
<dbReference type="PROSITE" id="PS51687">
    <property type="entry name" value="SAM_MT_RNA_M5U"/>
    <property type="match status" value="1"/>
</dbReference>
<dbReference type="PROSITE" id="PS50926">
    <property type="entry name" value="TRAM"/>
    <property type="match status" value="1"/>
</dbReference>
<dbReference type="PROSITE" id="PS01230">
    <property type="entry name" value="TRMA_1"/>
    <property type="match status" value="1"/>
</dbReference>
<dbReference type="PROSITE" id="PS01231">
    <property type="entry name" value="TRMA_2"/>
    <property type="match status" value="1"/>
</dbReference>
<keyword id="KW-0004">4Fe-4S</keyword>
<keyword id="KW-0408">Iron</keyword>
<keyword id="KW-0411">Iron-sulfur</keyword>
<keyword id="KW-0479">Metal-binding</keyword>
<keyword id="KW-0489">Methyltransferase</keyword>
<keyword id="KW-1185">Reference proteome</keyword>
<keyword id="KW-0698">rRNA processing</keyword>
<keyword id="KW-0949">S-adenosyl-L-methionine</keyword>
<keyword id="KW-0808">Transferase</keyword>
<gene>
    <name evidence="1" type="primary">rlmD</name>
    <name type="synonym">rumA</name>
    <name type="ordered locus">PBPRA3083</name>
</gene>
<accession>Q6LMS7</accession>
<reference key="1">
    <citation type="journal article" date="2005" name="Science">
        <title>Life at depth: Photobacterium profundum genome sequence and expression analysis.</title>
        <authorList>
            <person name="Vezzi A."/>
            <person name="Campanaro S."/>
            <person name="D'Angelo M."/>
            <person name="Simonato F."/>
            <person name="Vitulo N."/>
            <person name="Lauro F.M."/>
            <person name="Cestaro A."/>
            <person name="Malacrida G."/>
            <person name="Simionati B."/>
            <person name="Cannata N."/>
            <person name="Romualdi C."/>
            <person name="Bartlett D.H."/>
            <person name="Valle G."/>
        </authorList>
    </citation>
    <scope>NUCLEOTIDE SEQUENCE [LARGE SCALE GENOMIC DNA]</scope>
    <source>
        <strain>ATCC BAA-1253 / SS9</strain>
    </source>
</reference>
<evidence type="ECO:0000255" key="1">
    <source>
        <dbReference type="HAMAP-Rule" id="MF_01010"/>
    </source>
</evidence>
<evidence type="ECO:0000305" key="2"/>
<protein>
    <recommendedName>
        <fullName evidence="1">23S rRNA (uracil(1939)-C(5))-methyltransferase RlmD</fullName>
        <ecNumber evidence="1">2.1.1.190</ecNumber>
    </recommendedName>
    <alternativeName>
        <fullName evidence="1">23S rRNA(m5U1939)-methyltransferase</fullName>
    </alternativeName>
</protein>
<organism>
    <name type="scientific">Photobacterium profundum (strain SS9)</name>
    <dbReference type="NCBI Taxonomy" id="298386"/>
    <lineage>
        <taxon>Bacteria</taxon>
        <taxon>Pseudomonadati</taxon>
        <taxon>Pseudomonadota</taxon>
        <taxon>Gammaproteobacteria</taxon>
        <taxon>Vibrionales</taxon>
        <taxon>Vibrionaceae</taxon>
        <taxon>Photobacterium</taxon>
    </lineage>
</organism>
<feature type="chain" id="PRO_0000161906" description="23S rRNA (uracil(1939)-C(5))-methyltransferase RlmD">
    <location>
        <begin position="1"/>
        <end position="466"/>
    </location>
</feature>
<feature type="domain" description="TRAM" evidence="1">
    <location>
        <begin position="11"/>
        <end position="69"/>
    </location>
</feature>
<feature type="active site" description="Nucleophile" evidence="1">
    <location>
        <position position="411"/>
    </location>
</feature>
<feature type="binding site" evidence="1">
    <location>
        <position position="82"/>
    </location>
    <ligand>
        <name>[4Fe-4S] cluster</name>
        <dbReference type="ChEBI" id="CHEBI:49883"/>
    </ligand>
</feature>
<feature type="binding site" evidence="1">
    <location>
        <position position="88"/>
    </location>
    <ligand>
        <name>[4Fe-4S] cluster</name>
        <dbReference type="ChEBI" id="CHEBI:49883"/>
    </ligand>
</feature>
<feature type="binding site" evidence="1">
    <location>
        <position position="91"/>
    </location>
    <ligand>
        <name>[4Fe-4S] cluster</name>
        <dbReference type="ChEBI" id="CHEBI:49883"/>
    </ligand>
</feature>
<feature type="binding site" evidence="1">
    <location>
        <position position="184"/>
    </location>
    <ligand>
        <name>[4Fe-4S] cluster</name>
        <dbReference type="ChEBI" id="CHEBI:49883"/>
    </ligand>
</feature>
<feature type="binding site" evidence="1">
    <location>
        <position position="287"/>
    </location>
    <ligand>
        <name>S-adenosyl-L-methionine</name>
        <dbReference type="ChEBI" id="CHEBI:59789"/>
    </ligand>
</feature>
<feature type="binding site" evidence="1">
    <location>
        <position position="316"/>
    </location>
    <ligand>
        <name>S-adenosyl-L-methionine</name>
        <dbReference type="ChEBI" id="CHEBI:59789"/>
    </ligand>
</feature>
<feature type="binding site" evidence="1">
    <location>
        <position position="321"/>
    </location>
    <ligand>
        <name>S-adenosyl-L-methionine</name>
        <dbReference type="ChEBI" id="CHEBI:59789"/>
    </ligand>
</feature>
<feature type="binding site" evidence="1">
    <location>
        <position position="337"/>
    </location>
    <ligand>
        <name>S-adenosyl-L-methionine</name>
        <dbReference type="ChEBI" id="CHEBI:59789"/>
    </ligand>
</feature>
<feature type="binding site" evidence="1">
    <location>
        <position position="364"/>
    </location>
    <ligand>
        <name>S-adenosyl-L-methionine</name>
        <dbReference type="ChEBI" id="CHEBI:59789"/>
    </ligand>
</feature>
<feature type="binding site" evidence="1">
    <location>
        <position position="385"/>
    </location>
    <ligand>
        <name>S-adenosyl-L-methionine</name>
        <dbReference type="ChEBI" id="CHEBI:59789"/>
    </ligand>
</feature>
<comment type="function">
    <text evidence="1">Catalyzes the formation of 5-methyl-uridine at position 1939 (m5U1939) in 23S rRNA.</text>
</comment>
<comment type="catalytic activity">
    <reaction evidence="1">
        <text>uridine(1939) in 23S rRNA + S-adenosyl-L-methionine = 5-methyluridine(1939) in 23S rRNA + S-adenosyl-L-homocysteine + H(+)</text>
        <dbReference type="Rhea" id="RHEA:42908"/>
        <dbReference type="Rhea" id="RHEA-COMP:10278"/>
        <dbReference type="Rhea" id="RHEA-COMP:10279"/>
        <dbReference type="ChEBI" id="CHEBI:15378"/>
        <dbReference type="ChEBI" id="CHEBI:57856"/>
        <dbReference type="ChEBI" id="CHEBI:59789"/>
        <dbReference type="ChEBI" id="CHEBI:65315"/>
        <dbReference type="ChEBI" id="CHEBI:74447"/>
        <dbReference type="EC" id="2.1.1.190"/>
    </reaction>
</comment>
<comment type="similarity">
    <text evidence="1">Belongs to the class I-like SAM-binding methyltransferase superfamily. RNA M5U methyltransferase family. RlmD subfamily.</text>
</comment>
<comment type="sequence caution" evidence="2">
    <conflict type="erroneous initiation">
        <sequence resource="EMBL-CDS" id="CAG21399"/>
    </conflict>
</comment>
<name>RLMD_PHOPR</name>
<sequence length="466" mass="52495">MARFFKPQKRKITDTKHKEIVINRLDHLGAGIGHLNNKSIFVDGLLPGEKALVQITDDKKQYARAKVIKRLIDSPARIKPHCPIYDQCGGCNLQHLSHQGQVLAKQQALSDLMVKFAGDQQVAVDKQRAGDQQRALFEQVTPIIAAEHHYRRCARFSVLLGKDGQLQFGLRKKQSKDIVNVKQCPVLAESLNELLPPLRSLLSTLKGQRHLGHIELIEADNGRVVLIRHLKPFSDKDMTLILNFAQEQNVILFLAPTSDDIELIHGETPYYRLDDLTLHFSPKDFIQVNRDVNKKMVEQATDWLDLQPSDRVLDLFCGLGNFSLPLAKHAKAVVGVEGIDEMVHRATENAMCNKQNNATFYQANLDEDVTKLAWAREPFNKILLDPARAGAAGVMEHVVKLKPERVVYVSCNPATLARDSQVLLKKGYQLERLGMLDMFPQTGHLESMALFVKAKAVKKKRVVTKL</sequence>